<accession>Q9D281</accession>
<accession>Q8BMQ0</accession>
<accession>Q8R2U1</accession>
<accession>Q9D3K6</accession>
<evidence type="ECO:0000250" key="1">
    <source>
        <dbReference type="UniProtKB" id="Q8IWE2"/>
    </source>
</evidence>
<evidence type="ECO:0000256" key="2">
    <source>
        <dbReference type="SAM" id="MobiDB-lite"/>
    </source>
</evidence>
<evidence type="ECO:0000305" key="3"/>
<evidence type="ECO:0007744" key="4">
    <source>
    </source>
</evidence>
<name>NXP20_MOUSE</name>
<dbReference type="EMBL" id="AM162548">
    <property type="protein sequence ID" value="CAJ44264.1"/>
    <property type="molecule type" value="mRNA"/>
</dbReference>
<dbReference type="EMBL" id="AK017336">
    <property type="protein sequence ID" value="BAB30694.1"/>
    <property type="molecule type" value="mRNA"/>
</dbReference>
<dbReference type="EMBL" id="AK020262">
    <property type="protein sequence ID" value="BAB32046.1"/>
    <property type="molecule type" value="mRNA"/>
</dbReference>
<dbReference type="EMBL" id="AK030360">
    <property type="protein sequence ID" value="BAC26919.1"/>
    <property type="molecule type" value="mRNA"/>
</dbReference>
<dbReference type="EMBL" id="BC027235">
    <property type="protein sequence ID" value="AAH27235.1"/>
    <property type="molecule type" value="mRNA"/>
</dbReference>
<dbReference type="EMBL" id="BC110359">
    <property type="protein sequence ID" value="AAI10360.1"/>
    <property type="molecule type" value="mRNA"/>
</dbReference>
<dbReference type="CCDS" id="CCDS19304.1"/>
<dbReference type="RefSeq" id="NP_080943.3">
    <property type="nucleotide sequence ID" value="NM_026667.3"/>
</dbReference>
<dbReference type="SMR" id="Q9D281"/>
<dbReference type="BioGRID" id="212793">
    <property type="interactions" value="4"/>
</dbReference>
<dbReference type="FunCoup" id="Q9D281">
    <property type="interactions" value="1731"/>
</dbReference>
<dbReference type="STRING" id="10090.ENSMUSP00000031080"/>
<dbReference type="GlyGen" id="Q9D281">
    <property type="glycosylation" value="2 sites, 1 O-linked glycan (1 site)"/>
</dbReference>
<dbReference type="iPTMnet" id="Q9D281"/>
<dbReference type="PhosphoSitePlus" id="Q9D281"/>
<dbReference type="SwissPalm" id="Q9D281"/>
<dbReference type="jPOST" id="Q9D281"/>
<dbReference type="PaxDb" id="10090-ENSMUSP00000031080"/>
<dbReference type="PeptideAtlas" id="Q9D281"/>
<dbReference type="ProteomicsDB" id="294257"/>
<dbReference type="Pumba" id="Q9D281"/>
<dbReference type="Antibodypedia" id="68341">
    <property type="antibodies" value="49 antibodies from 17 providers"/>
</dbReference>
<dbReference type="DNASU" id="68303"/>
<dbReference type="Ensembl" id="ENSMUST00000031080.15">
    <property type="protein sequence ID" value="ENSMUSP00000031080.9"/>
    <property type="gene ID" value="ENSMUSG00000029185.15"/>
</dbReference>
<dbReference type="GeneID" id="68303"/>
<dbReference type="KEGG" id="mmu:68303"/>
<dbReference type="UCSC" id="uc012dwn.1">
    <property type="organism name" value="mouse"/>
</dbReference>
<dbReference type="AGR" id="MGI:1915553"/>
<dbReference type="CTD" id="92689"/>
<dbReference type="MGI" id="MGI:1915553">
    <property type="gene designation" value="Fam114a1"/>
</dbReference>
<dbReference type="VEuPathDB" id="HostDB:ENSMUSG00000029185"/>
<dbReference type="eggNOG" id="ENOG502R83C">
    <property type="taxonomic scope" value="Eukaryota"/>
</dbReference>
<dbReference type="GeneTree" id="ENSGT00390000010054"/>
<dbReference type="HOGENOM" id="CLU_035724_0_0_1"/>
<dbReference type="InParanoid" id="Q9D281"/>
<dbReference type="OMA" id="WSTWGKS"/>
<dbReference type="OrthoDB" id="5597648at2759"/>
<dbReference type="PhylomeDB" id="Q9D281"/>
<dbReference type="TreeFam" id="TF324360"/>
<dbReference type="BioGRID-ORCS" id="68303">
    <property type="hits" value="3 hits in 76 CRISPR screens"/>
</dbReference>
<dbReference type="ChiTaRS" id="Fam114a1">
    <property type="organism name" value="mouse"/>
</dbReference>
<dbReference type="PRO" id="PR:Q9D281"/>
<dbReference type="Proteomes" id="UP000000589">
    <property type="component" value="Chromosome 5"/>
</dbReference>
<dbReference type="RNAct" id="Q9D281">
    <property type="molecule type" value="protein"/>
</dbReference>
<dbReference type="Bgee" id="ENSMUSG00000029185">
    <property type="expression patterns" value="Expressed in humerus cartilage element and 235 other cell types or tissues"/>
</dbReference>
<dbReference type="ExpressionAtlas" id="Q9D281">
    <property type="expression patterns" value="baseline and differential"/>
</dbReference>
<dbReference type="GO" id="GO:0005829">
    <property type="term" value="C:cytosol"/>
    <property type="evidence" value="ECO:0007669"/>
    <property type="project" value="Ensembl"/>
</dbReference>
<dbReference type="GO" id="GO:0005794">
    <property type="term" value="C:Golgi apparatus"/>
    <property type="evidence" value="ECO:0007669"/>
    <property type="project" value="Ensembl"/>
</dbReference>
<dbReference type="GO" id="GO:0005654">
    <property type="term" value="C:nucleoplasm"/>
    <property type="evidence" value="ECO:0007669"/>
    <property type="project" value="Ensembl"/>
</dbReference>
<dbReference type="GO" id="GO:0038166">
    <property type="term" value="P:angiotensin-activated signaling pathway"/>
    <property type="evidence" value="ECO:0000315"/>
    <property type="project" value="MGI"/>
</dbReference>
<dbReference type="GO" id="GO:0097709">
    <property type="term" value="P:connective tissue replacement"/>
    <property type="evidence" value="ECO:0000315"/>
    <property type="project" value="MGI"/>
</dbReference>
<dbReference type="GO" id="GO:0072537">
    <property type="term" value="P:fibroblast activation"/>
    <property type="evidence" value="ECO:0000315"/>
    <property type="project" value="MGI"/>
</dbReference>
<dbReference type="GO" id="GO:0010761">
    <property type="term" value="P:fibroblast migration"/>
    <property type="evidence" value="ECO:0000315"/>
    <property type="project" value="MGI"/>
</dbReference>
<dbReference type="GO" id="GO:0048144">
    <property type="term" value="P:fibroblast proliferation"/>
    <property type="evidence" value="ECO:0000315"/>
    <property type="project" value="MGI"/>
</dbReference>
<dbReference type="GO" id="GO:0010467">
    <property type="term" value="P:gene expression"/>
    <property type="evidence" value="ECO:0000315"/>
    <property type="project" value="MGI"/>
</dbReference>
<dbReference type="GO" id="GO:0003179">
    <property type="term" value="P:heart valve morphogenesis"/>
    <property type="evidence" value="ECO:0000315"/>
    <property type="project" value="MGI"/>
</dbReference>
<dbReference type="GO" id="GO:0006954">
    <property type="term" value="P:inflammatory response"/>
    <property type="evidence" value="ECO:0000315"/>
    <property type="project" value="MGI"/>
</dbReference>
<dbReference type="GO" id="GO:0048771">
    <property type="term" value="P:tissue remodeling"/>
    <property type="evidence" value="ECO:0000315"/>
    <property type="project" value="MGI"/>
</dbReference>
<dbReference type="InterPro" id="IPR007998">
    <property type="entry name" value="DUF719"/>
</dbReference>
<dbReference type="PANTHER" id="PTHR12842">
    <property type="entry name" value="FI01459P"/>
    <property type="match status" value="1"/>
</dbReference>
<dbReference type="PANTHER" id="PTHR12842:SF4">
    <property type="entry name" value="PROTEIN NOXP20"/>
    <property type="match status" value="1"/>
</dbReference>
<dbReference type="Pfam" id="PF05334">
    <property type="entry name" value="DUF719"/>
    <property type="match status" value="1"/>
</dbReference>
<sequence>MSDDARDTIANGVGEDAAEMPNSDSPAEDAAEVQCGPATTSNEPAPDDHMEEQPEITAMCAESTPPGILDQSKASAADETPLNGEVTEDTLVECVDSVSLEGDTGSEIPLKEQDDAAVDPSSQAGRWAGWGSWGKSLLSSASATVGHGLTAVKEKAGATLRIHSANSASPEGAPTDAENGISGNVTPDQDPARGPHTPPPPGAAGSRGMLSALTNVVQNTGKSVLTGGLDALEFIGKKTMIVLAESDPGFKRTKTLMERTVSLSQMLREAKEKEKQRLAQQLTVERTAHYGMLFDEYQGLSHLEALEILSNESESKVQSFLTSLDGEKLELLKNDLISIKDIFVAKESENEANPEEQGLEESGEEFARMLTELLFELHVAATPDKLNKAMKKAHDWVEEDQSVVSIDVAKGSEEEEKEEGKEEKAEEPEEDKTGGQGAKTVEEVYMLSIESLAEVTARCIEQLHKVAELILHGQEEEKPAQDQARVLIKLTTAMCNEVTSLSKKFTNSLTTVGSNKKAEVLNPMINSVFLEGSNSTTYVQDALQLLLPVLQVSHIRTSCLKATAQPDCS</sequence>
<reference key="1">
    <citation type="journal article" date="2006" name="J. Neurochem.">
        <title>Noxp20 and Noxp70, two new markers of early neuronal differentiation, detected in teratocarcinoma-derived neuroectodermic precursor cells.</title>
        <authorList>
            <person name="Boucquey M.F.A."/>
            <person name="De Plaen E."/>
            <person name="Locker M."/>
            <person name="Poliard A."/>
            <person name="Mouillet-Richard S."/>
            <person name="Boon T."/>
            <person name="Kellermann O."/>
        </authorList>
    </citation>
    <scope>NUCLEOTIDE SEQUENCE [MRNA]</scope>
    <source>
        <strain>129/Sv</strain>
    </source>
</reference>
<reference key="2">
    <citation type="journal article" date="2005" name="Science">
        <title>The transcriptional landscape of the mammalian genome.</title>
        <authorList>
            <person name="Carninci P."/>
            <person name="Kasukawa T."/>
            <person name="Katayama S."/>
            <person name="Gough J."/>
            <person name="Frith M.C."/>
            <person name="Maeda N."/>
            <person name="Oyama R."/>
            <person name="Ravasi T."/>
            <person name="Lenhard B."/>
            <person name="Wells C."/>
            <person name="Kodzius R."/>
            <person name="Shimokawa K."/>
            <person name="Bajic V.B."/>
            <person name="Brenner S.E."/>
            <person name="Batalov S."/>
            <person name="Forrest A.R."/>
            <person name="Zavolan M."/>
            <person name="Davis M.J."/>
            <person name="Wilming L.G."/>
            <person name="Aidinis V."/>
            <person name="Allen J.E."/>
            <person name="Ambesi-Impiombato A."/>
            <person name="Apweiler R."/>
            <person name="Aturaliya R.N."/>
            <person name="Bailey T.L."/>
            <person name="Bansal M."/>
            <person name="Baxter L."/>
            <person name="Beisel K.W."/>
            <person name="Bersano T."/>
            <person name="Bono H."/>
            <person name="Chalk A.M."/>
            <person name="Chiu K.P."/>
            <person name="Choudhary V."/>
            <person name="Christoffels A."/>
            <person name="Clutterbuck D.R."/>
            <person name="Crowe M.L."/>
            <person name="Dalla E."/>
            <person name="Dalrymple B.P."/>
            <person name="de Bono B."/>
            <person name="Della Gatta G."/>
            <person name="di Bernardo D."/>
            <person name="Down T."/>
            <person name="Engstrom P."/>
            <person name="Fagiolini M."/>
            <person name="Faulkner G."/>
            <person name="Fletcher C.F."/>
            <person name="Fukushima T."/>
            <person name="Furuno M."/>
            <person name="Futaki S."/>
            <person name="Gariboldi M."/>
            <person name="Georgii-Hemming P."/>
            <person name="Gingeras T.R."/>
            <person name="Gojobori T."/>
            <person name="Green R.E."/>
            <person name="Gustincich S."/>
            <person name="Harbers M."/>
            <person name="Hayashi Y."/>
            <person name="Hensch T.K."/>
            <person name="Hirokawa N."/>
            <person name="Hill D."/>
            <person name="Huminiecki L."/>
            <person name="Iacono M."/>
            <person name="Ikeo K."/>
            <person name="Iwama A."/>
            <person name="Ishikawa T."/>
            <person name="Jakt M."/>
            <person name="Kanapin A."/>
            <person name="Katoh M."/>
            <person name="Kawasawa Y."/>
            <person name="Kelso J."/>
            <person name="Kitamura H."/>
            <person name="Kitano H."/>
            <person name="Kollias G."/>
            <person name="Krishnan S.P."/>
            <person name="Kruger A."/>
            <person name="Kummerfeld S.K."/>
            <person name="Kurochkin I.V."/>
            <person name="Lareau L.F."/>
            <person name="Lazarevic D."/>
            <person name="Lipovich L."/>
            <person name="Liu J."/>
            <person name="Liuni S."/>
            <person name="McWilliam S."/>
            <person name="Madan Babu M."/>
            <person name="Madera M."/>
            <person name="Marchionni L."/>
            <person name="Matsuda H."/>
            <person name="Matsuzawa S."/>
            <person name="Miki H."/>
            <person name="Mignone F."/>
            <person name="Miyake S."/>
            <person name="Morris K."/>
            <person name="Mottagui-Tabar S."/>
            <person name="Mulder N."/>
            <person name="Nakano N."/>
            <person name="Nakauchi H."/>
            <person name="Ng P."/>
            <person name="Nilsson R."/>
            <person name="Nishiguchi S."/>
            <person name="Nishikawa S."/>
            <person name="Nori F."/>
            <person name="Ohara O."/>
            <person name="Okazaki Y."/>
            <person name="Orlando V."/>
            <person name="Pang K.C."/>
            <person name="Pavan W.J."/>
            <person name="Pavesi G."/>
            <person name="Pesole G."/>
            <person name="Petrovsky N."/>
            <person name="Piazza S."/>
            <person name="Reed J."/>
            <person name="Reid J.F."/>
            <person name="Ring B.Z."/>
            <person name="Ringwald M."/>
            <person name="Rost B."/>
            <person name="Ruan Y."/>
            <person name="Salzberg S.L."/>
            <person name="Sandelin A."/>
            <person name="Schneider C."/>
            <person name="Schoenbach C."/>
            <person name="Sekiguchi K."/>
            <person name="Semple C.A."/>
            <person name="Seno S."/>
            <person name="Sessa L."/>
            <person name="Sheng Y."/>
            <person name="Shibata Y."/>
            <person name="Shimada H."/>
            <person name="Shimada K."/>
            <person name="Silva D."/>
            <person name="Sinclair B."/>
            <person name="Sperling S."/>
            <person name="Stupka E."/>
            <person name="Sugiura K."/>
            <person name="Sultana R."/>
            <person name="Takenaka Y."/>
            <person name="Taki K."/>
            <person name="Tammoja K."/>
            <person name="Tan S.L."/>
            <person name="Tang S."/>
            <person name="Taylor M.S."/>
            <person name="Tegner J."/>
            <person name="Teichmann S.A."/>
            <person name="Ueda H.R."/>
            <person name="van Nimwegen E."/>
            <person name="Verardo R."/>
            <person name="Wei C.L."/>
            <person name="Yagi K."/>
            <person name="Yamanishi H."/>
            <person name="Zabarovsky E."/>
            <person name="Zhu S."/>
            <person name="Zimmer A."/>
            <person name="Hide W."/>
            <person name="Bult C."/>
            <person name="Grimmond S.M."/>
            <person name="Teasdale R.D."/>
            <person name="Liu E.T."/>
            <person name="Brusic V."/>
            <person name="Quackenbush J."/>
            <person name="Wahlestedt C."/>
            <person name="Mattick J.S."/>
            <person name="Hume D.A."/>
            <person name="Kai C."/>
            <person name="Sasaki D."/>
            <person name="Tomaru Y."/>
            <person name="Fukuda S."/>
            <person name="Kanamori-Katayama M."/>
            <person name="Suzuki M."/>
            <person name="Aoki J."/>
            <person name="Arakawa T."/>
            <person name="Iida J."/>
            <person name="Imamura K."/>
            <person name="Itoh M."/>
            <person name="Kato T."/>
            <person name="Kawaji H."/>
            <person name="Kawagashira N."/>
            <person name="Kawashima T."/>
            <person name="Kojima M."/>
            <person name="Kondo S."/>
            <person name="Konno H."/>
            <person name="Nakano K."/>
            <person name="Ninomiya N."/>
            <person name="Nishio T."/>
            <person name="Okada M."/>
            <person name="Plessy C."/>
            <person name="Shibata K."/>
            <person name="Shiraki T."/>
            <person name="Suzuki S."/>
            <person name="Tagami M."/>
            <person name="Waki K."/>
            <person name="Watahiki A."/>
            <person name="Okamura-Oho Y."/>
            <person name="Suzuki H."/>
            <person name="Kawai J."/>
            <person name="Hayashizaki Y."/>
        </authorList>
    </citation>
    <scope>NUCLEOTIDE SEQUENCE [LARGE SCALE MRNA]</scope>
    <source>
        <strain>C57BL/6J</strain>
        <tissue>Cecum</tissue>
        <tissue>Head</tissue>
        <tissue>Pituitary</tissue>
    </source>
</reference>
<reference key="3">
    <citation type="journal article" date="2004" name="Genome Res.">
        <title>The status, quality, and expansion of the NIH full-length cDNA project: the Mammalian Gene Collection (MGC).</title>
        <authorList>
            <consortium name="The MGC Project Team"/>
        </authorList>
    </citation>
    <scope>NUCLEOTIDE SEQUENCE [LARGE SCALE MRNA]</scope>
    <source>
        <strain>FVB/N</strain>
        <tissue>Mammary tumor</tissue>
    </source>
</reference>
<reference key="4">
    <citation type="journal article" date="2010" name="Cell">
        <title>A tissue-specific atlas of mouse protein phosphorylation and expression.</title>
        <authorList>
            <person name="Huttlin E.L."/>
            <person name="Jedrychowski M.P."/>
            <person name="Elias J.E."/>
            <person name="Goswami T."/>
            <person name="Rad R."/>
            <person name="Beausoleil S.A."/>
            <person name="Villen J."/>
            <person name="Haas W."/>
            <person name="Sowa M.E."/>
            <person name="Gygi S.P."/>
        </authorList>
    </citation>
    <scope>PHOSPHORYLATION [LARGE SCALE ANALYSIS] AT THR-197</scope>
    <scope>IDENTIFICATION BY MASS SPECTROMETRY [LARGE SCALE ANALYSIS]</scope>
    <source>
        <tissue>Brown adipose tissue</tissue>
        <tissue>Heart</tissue>
        <tissue>Kidney</tissue>
        <tissue>Liver</tissue>
        <tissue>Lung</tissue>
        <tissue>Pancreas</tissue>
        <tissue>Spleen</tissue>
        <tissue>Testis</tissue>
    </source>
</reference>
<proteinExistence type="evidence at protein level"/>
<keyword id="KW-0963">Cytoplasm</keyword>
<keyword id="KW-0597">Phosphoprotein</keyword>
<keyword id="KW-1185">Reference proteome</keyword>
<feature type="chain" id="PRO_0000274562" description="Protein Noxp20">
    <location>
        <begin position="1"/>
        <end position="569"/>
    </location>
</feature>
<feature type="region of interest" description="Disordered" evidence="2">
    <location>
        <begin position="1"/>
        <end position="87"/>
    </location>
</feature>
<feature type="region of interest" description="Disordered" evidence="2">
    <location>
        <begin position="102"/>
        <end position="126"/>
    </location>
</feature>
<feature type="region of interest" description="Disordered" evidence="2">
    <location>
        <begin position="165"/>
        <end position="208"/>
    </location>
</feature>
<feature type="region of interest" description="Disordered" evidence="2">
    <location>
        <begin position="404"/>
        <end position="439"/>
    </location>
</feature>
<feature type="modified residue" description="Phosphothreonine" evidence="4">
    <location>
        <position position="197"/>
    </location>
</feature>
<feature type="modified residue" description="Phosphoserine" evidence="1">
    <location>
        <position position="262"/>
    </location>
</feature>
<feature type="sequence conflict" description="In Ref. 2; BAC26919." evidence="3" ref="2">
    <original>L</original>
    <variation>P</variation>
    <location>
        <position position="374"/>
    </location>
</feature>
<feature type="sequence conflict" description="In Ref. 2; BAB30694." evidence="3" ref="2">
    <original>E</original>
    <variation>G</variation>
    <location>
        <position position="427"/>
    </location>
</feature>
<feature type="sequence conflict" description="In Ref. 3; AAH27235/AAI10360." evidence="3" ref="3">
    <original>C</original>
    <variation>S</variation>
    <location>
        <position position="568"/>
    </location>
</feature>
<protein>
    <recommendedName>
        <fullName>Protein Noxp20</fullName>
    </recommendedName>
    <alternativeName>
        <fullName>Nervous system overexpressed protein 20</fullName>
    </alternativeName>
    <alternativeName>
        <fullName>Protein FAM114A1</fullName>
    </alternativeName>
</protein>
<gene>
    <name type="primary">Fam114a1</name>
    <name type="synonym">Noxp20</name>
</gene>
<comment type="function">
    <text>May play a role in neuronal cell development.</text>
</comment>
<comment type="subcellular location">
    <subcellularLocation>
        <location>Cytoplasm</location>
    </subcellularLocation>
</comment>
<comment type="tissue specificity">
    <text>Over-expressed in brain. Also detected in lung, stomach, and in a lower extent in testis and thymus.</text>
</comment>
<comment type="developmental stage">
    <text>At embryonic days 12 and 15, it is strongly expressed in the ventricular and intermediate zones of the brain and of the spinal cord. At postnatal day 10, it is detected in the dentate gyrus, the hippocampus, the cerebellum and the olfactory bulb.</text>
</comment>
<comment type="similarity">
    <text evidence="3">Belongs to the FAM114 family.</text>
</comment>
<organism>
    <name type="scientific">Mus musculus</name>
    <name type="common">Mouse</name>
    <dbReference type="NCBI Taxonomy" id="10090"/>
    <lineage>
        <taxon>Eukaryota</taxon>
        <taxon>Metazoa</taxon>
        <taxon>Chordata</taxon>
        <taxon>Craniata</taxon>
        <taxon>Vertebrata</taxon>
        <taxon>Euteleostomi</taxon>
        <taxon>Mammalia</taxon>
        <taxon>Eutheria</taxon>
        <taxon>Euarchontoglires</taxon>
        <taxon>Glires</taxon>
        <taxon>Rodentia</taxon>
        <taxon>Myomorpha</taxon>
        <taxon>Muroidea</taxon>
        <taxon>Muridae</taxon>
        <taxon>Murinae</taxon>
        <taxon>Mus</taxon>
        <taxon>Mus</taxon>
    </lineage>
</organism>